<comment type="function">
    <text evidence="1">Catalyzes the ATP-dependent transfer of a sulfur to tRNA to produce 4-thiouridine in position 8 of tRNAs, which functions as a near-UV photosensor. Also catalyzes the transfer of sulfur to the sulfur carrier protein ThiS, forming ThiS-thiocarboxylate. This is a step in the synthesis of thiazole, in the thiamine biosynthesis pathway. The sulfur is donated as persulfide by IscS.</text>
</comment>
<comment type="catalytic activity">
    <reaction evidence="1">
        <text>[ThiI sulfur-carrier protein]-S-sulfanyl-L-cysteine + a uridine in tRNA + 2 reduced [2Fe-2S]-[ferredoxin] + ATP + H(+) = [ThiI sulfur-carrier protein]-L-cysteine + a 4-thiouridine in tRNA + 2 oxidized [2Fe-2S]-[ferredoxin] + AMP + diphosphate</text>
        <dbReference type="Rhea" id="RHEA:24176"/>
        <dbReference type="Rhea" id="RHEA-COMP:10000"/>
        <dbReference type="Rhea" id="RHEA-COMP:10001"/>
        <dbReference type="Rhea" id="RHEA-COMP:13337"/>
        <dbReference type="Rhea" id="RHEA-COMP:13338"/>
        <dbReference type="Rhea" id="RHEA-COMP:13339"/>
        <dbReference type="Rhea" id="RHEA-COMP:13340"/>
        <dbReference type="ChEBI" id="CHEBI:15378"/>
        <dbReference type="ChEBI" id="CHEBI:29950"/>
        <dbReference type="ChEBI" id="CHEBI:30616"/>
        <dbReference type="ChEBI" id="CHEBI:33019"/>
        <dbReference type="ChEBI" id="CHEBI:33737"/>
        <dbReference type="ChEBI" id="CHEBI:33738"/>
        <dbReference type="ChEBI" id="CHEBI:61963"/>
        <dbReference type="ChEBI" id="CHEBI:65315"/>
        <dbReference type="ChEBI" id="CHEBI:136798"/>
        <dbReference type="ChEBI" id="CHEBI:456215"/>
        <dbReference type="EC" id="2.8.1.4"/>
    </reaction>
</comment>
<comment type="catalytic activity">
    <reaction evidence="1">
        <text>[ThiS sulfur-carrier protein]-C-terminal Gly-Gly-AMP + S-sulfanyl-L-cysteinyl-[cysteine desulfurase] + AH2 = [ThiS sulfur-carrier protein]-C-terminal-Gly-aminoethanethioate + L-cysteinyl-[cysteine desulfurase] + A + AMP + 2 H(+)</text>
        <dbReference type="Rhea" id="RHEA:43340"/>
        <dbReference type="Rhea" id="RHEA-COMP:12157"/>
        <dbReference type="Rhea" id="RHEA-COMP:12158"/>
        <dbReference type="Rhea" id="RHEA-COMP:12910"/>
        <dbReference type="Rhea" id="RHEA-COMP:19908"/>
        <dbReference type="ChEBI" id="CHEBI:13193"/>
        <dbReference type="ChEBI" id="CHEBI:15378"/>
        <dbReference type="ChEBI" id="CHEBI:17499"/>
        <dbReference type="ChEBI" id="CHEBI:29950"/>
        <dbReference type="ChEBI" id="CHEBI:61963"/>
        <dbReference type="ChEBI" id="CHEBI:90618"/>
        <dbReference type="ChEBI" id="CHEBI:232372"/>
        <dbReference type="ChEBI" id="CHEBI:456215"/>
    </reaction>
</comment>
<comment type="pathway">
    <text evidence="1">Cofactor biosynthesis; thiamine diphosphate biosynthesis.</text>
</comment>
<comment type="subcellular location">
    <subcellularLocation>
        <location evidence="1">Cytoplasm</location>
    </subcellularLocation>
</comment>
<comment type="similarity">
    <text evidence="1">Belongs to the ThiI family.</text>
</comment>
<feature type="chain" id="PRO_1000074293" description="Probable tRNA sulfurtransferase">
    <location>
        <begin position="1"/>
        <end position="404"/>
    </location>
</feature>
<feature type="domain" description="THUMP" evidence="1">
    <location>
        <begin position="60"/>
        <end position="165"/>
    </location>
</feature>
<feature type="binding site" evidence="1">
    <location>
        <begin position="183"/>
        <end position="184"/>
    </location>
    <ligand>
        <name>ATP</name>
        <dbReference type="ChEBI" id="CHEBI:30616"/>
    </ligand>
</feature>
<feature type="binding site" evidence="1">
    <location>
        <begin position="208"/>
        <end position="209"/>
    </location>
    <ligand>
        <name>ATP</name>
        <dbReference type="ChEBI" id="CHEBI:30616"/>
    </ligand>
</feature>
<feature type="binding site" evidence="1">
    <location>
        <position position="265"/>
    </location>
    <ligand>
        <name>ATP</name>
        <dbReference type="ChEBI" id="CHEBI:30616"/>
    </ligand>
</feature>
<feature type="binding site" evidence="1">
    <location>
        <position position="287"/>
    </location>
    <ligand>
        <name>ATP</name>
        <dbReference type="ChEBI" id="CHEBI:30616"/>
    </ligand>
</feature>
<feature type="binding site" evidence="1">
    <location>
        <position position="296"/>
    </location>
    <ligand>
        <name>ATP</name>
        <dbReference type="ChEBI" id="CHEBI:30616"/>
    </ligand>
</feature>
<sequence>MHYSEIMVRYGELSTKGKNRMRFINKLKRNIQSVLSIYPQVHVKADRDRTHIYLHGTDYQPVAESLKQIFGIQNFSPSYRVKKSVPALIEAVQTIMKQVYQEGMTFKITSKRSDHSFELDSRELNQTLGDAVFMAIPNVQVKMKAPDIELRVEIREEAAYISYETIRGAGGLPVGTSGKGMLMLSGGIDSPVAGYLALKRGVDIEAVHFASPPYTSPGALKKAQDLTRKLTKFGGNIQFIEVPFTDIQEEIKAKAPEAYLMTLTRRFMMRITDRIREERGAQVIINGESLGQVASQTIESMQAINAVTNTPVIRPVVTMDKLEIIEIAEKIDTFQISIQPFEDCCTIFAPDRPKTNPKIKNAEQYEARLDVEGLVERAVAGIMITEIRPQAETDEVDELIEGLL</sequence>
<protein>
    <recommendedName>
        <fullName evidence="1">Probable tRNA sulfurtransferase</fullName>
        <ecNumber evidence="1">2.8.1.4</ecNumber>
    </recommendedName>
    <alternativeName>
        <fullName evidence="1">Sulfur carrier protein ThiS sulfurtransferase</fullName>
    </alternativeName>
    <alternativeName>
        <fullName evidence="1">Thiamine biosynthesis protein ThiI</fullName>
    </alternativeName>
    <alternativeName>
        <fullName evidence="1">tRNA 4-thiouridine synthase</fullName>
    </alternativeName>
</protein>
<gene>
    <name evidence="1" type="primary">thiI</name>
    <name type="ordered locus">SGO_0815</name>
</gene>
<accession>A8AWF4</accession>
<name>THII_STRGC</name>
<reference key="1">
    <citation type="journal article" date="2007" name="J. Bacteriol.">
        <title>Genome-wide transcriptional changes in Streptococcus gordonii in response to competence signaling peptide.</title>
        <authorList>
            <person name="Vickerman M.M."/>
            <person name="Iobst S."/>
            <person name="Jesionowski A.M."/>
            <person name="Gill S.R."/>
        </authorList>
    </citation>
    <scope>NUCLEOTIDE SEQUENCE [LARGE SCALE GENOMIC DNA]</scope>
    <source>
        <strain>Challis / ATCC 35105 / BCRC 15272 / CH1 / DL1 / V288</strain>
    </source>
</reference>
<organism>
    <name type="scientific">Streptococcus gordonii (strain Challis / ATCC 35105 / BCRC 15272 / CH1 / DL1 / V288)</name>
    <dbReference type="NCBI Taxonomy" id="467705"/>
    <lineage>
        <taxon>Bacteria</taxon>
        <taxon>Bacillati</taxon>
        <taxon>Bacillota</taxon>
        <taxon>Bacilli</taxon>
        <taxon>Lactobacillales</taxon>
        <taxon>Streptococcaceae</taxon>
        <taxon>Streptococcus</taxon>
    </lineage>
</organism>
<proteinExistence type="inferred from homology"/>
<dbReference type="EC" id="2.8.1.4" evidence="1"/>
<dbReference type="EMBL" id="CP000725">
    <property type="protein sequence ID" value="ABV11158.1"/>
    <property type="molecule type" value="Genomic_DNA"/>
</dbReference>
<dbReference type="RefSeq" id="WP_012000274.1">
    <property type="nucleotide sequence ID" value="NC_009785.1"/>
</dbReference>
<dbReference type="SMR" id="A8AWF4"/>
<dbReference type="STRING" id="467705.SGO_0815"/>
<dbReference type="KEGG" id="sgo:SGO_0815"/>
<dbReference type="eggNOG" id="COG0301">
    <property type="taxonomic scope" value="Bacteria"/>
</dbReference>
<dbReference type="HOGENOM" id="CLU_037952_4_0_9"/>
<dbReference type="UniPathway" id="UPA00060"/>
<dbReference type="Proteomes" id="UP000001131">
    <property type="component" value="Chromosome"/>
</dbReference>
<dbReference type="GO" id="GO:0005829">
    <property type="term" value="C:cytosol"/>
    <property type="evidence" value="ECO:0007669"/>
    <property type="project" value="TreeGrafter"/>
</dbReference>
<dbReference type="GO" id="GO:0005524">
    <property type="term" value="F:ATP binding"/>
    <property type="evidence" value="ECO:0007669"/>
    <property type="project" value="UniProtKB-UniRule"/>
</dbReference>
<dbReference type="GO" id="GO:0004810">
    <property type="term" value="F:CCA tRNA nucleotidyltransferase activity"/>
    <property type="evidence" value="ECO:0007669"/>
    <property type="project" value="InterPro"/>
</dbReference>
<dbReference type="GO" id="GO:0000049">
    <property type="term" value="F:tRNA binding"/>
    <property type="evidence" value="ECO:0007669"/>
    <property type="project" value="UniProtKB-UniRule"/>
</dbReference>
<dbReference type="GO" id="GO:0140741">
    <property type="term" value="F:tRNA-uracil-4 sulfurtransferase activity"/>
    <property type="evidence" value="ECO:0007669"/>
    <property type="project" value="UniProtKB-EC"/>
</dbReference>
<dbReference type="GO" id="GO:0009228">
    <property type="term" value="P:thiamine biosynthetic process"/>
    <property type="evidence" value="ECO:0007669"/>
    <property type="project" value="UniProtKB-KW"/>
</dbReference>
<dbReference type="GO" id="GO:0009229">
    <property type="term" value="P:thiamine diphosphate biosynthetic process"/>
    <property type="evidence" value="ECO:0007669"/>
    <property type="project" value="UniProtKB-UniRule"/>
</dbReference>
<dbReference type="GO" id="GO:0052837">
    <property type="term" value="P:thiazole biosynthetic process"/>
    <property type="evidence" value="ECO:0007669"/>
    <property type="project" value="TreeGrafter"/>
</dbReference>
<dbReference type="GO" id="GO:0002937">
    <property type="term" value="P:tRNA 4-thiouridine biosynthesis"/>
    <property type="evidence" value="ECO:0007669"/>
    <property type="project" value="TreeGrafter"/>
</dbReference>
<dbReference type="CDD" id="cd01712">
    <property type="entry name" value="PPase_ThiI"/>
    <property type="match status" value="1"/>
</dbReference>
<dbReference type="CDD" id="cd11716">
    <property type="entry name" value="THUMP_ThiI"/>
    <property type="match status" value="1"/>
</dbReference>
<dbReference type="FunFam" id="3.40.50.620:FF:000053">
    <property type="entry name" value="Probable tRNA sulfurtransferase"/>
    <property type="match status" value="1"/>
</dbReference>
<dbReference type="Gene3D" id="3.30.2130.30">
    <property type="match status" value="1"/>
</dbReference>
<dbReference type="Gene3D" id="3.40.50.620">
    <property type="entry name" value="HUPs"/>
    <property type="match status" value="1"/>
</dbReference>
<dbReference type="HAMAP" id="MF_00021">
    <property type="entry name" value="ThiI"/>
    <property type="match status" value="1"/>
</dbReference>
<dbReference type="InterPro" id="IPR014729">
    <property type="entry name" value="Rossmann-like_a/b/a_fold"/>
</dbReference>
<dbReference type="InterPro" id="IPR020536">
    <property type="entry name" value="ThiI_AANH"/>
</dbReference>
<dbReference type="InterPro" id="IPR054173">
    <property type="entry name" value="ThiI_fer"/>
</dbReference>
<dbReference type="InterPro" id="IPR049961">
    <property type="entry name" value="ThiI_N"/>
</dbReference>
<dbReference type="InterPro" id="IPR004114">
    <property type="entry name" value="THUMP_dom"/>
</dbReference>
<dbReference type="InterPro" id="IPR049962">
    <property type="entry name" value="THUMP_ThiI"/>
</dbReference>
<dbReference type="InterPro" id="IPR003720">
    <property type="entry name" value="tRNA_STrfase"/>
</dbReference>
<dbReference type="InterPro" id="IPR050102">
    <property type="entry name" value="tRNA_sulfurtransferase_ThiI"/>
</dbReference>
<dbReference type="NCBIfam" id="TIGR00342">
    <property type="entry name" value="tRNA uracil 4-sulfurtransferase ThiI"/>
    <property type="match status" value="1"/>
</dbReference>
<dbReference type="PANTHER" id="PTHR43209">
    <property type="entry name" value="TRNA SULFURTRANSFERASE"/>
    <property type="match status" value="1"/>
</dbReference>
<dbReference type="PANTHER" id="PTHR43209:SF1">
    <property type="entry name" value="TRNA SULFURTRANSFERASE"/>
    <property type="match status" value="1"/>
</dbReference>
<dbReference type="Pfam" id="PF02568">
    <property type="entry name" value="ThiI"/>
    <property type="match status" value="1"/>
</dbReference>
<dbReference type="Pfam" id="PF22025">
    <property type="entry name" value="ThiI_fer"/>
    <property type="match status" value="1"/>
</dbReference>
<dbReference type="Pfam" id="PF02926">
    <property type="entry name" value="THUMP"/>
    <property type="match status" value="1"/>
</dbReference>
<dbReference type="SMART" id="SM00981">
    <property type="entry name" value="THUMP"/>
    <property type="match status" value="1"/>
</dbReference>
<dbReference type="SUPFAM" id="SSF52402">
    <property type="entry name" value="Adenine nucleotide alpha hydrolases-like"/>
    <property type="match status" value="1"/>
</dbReference>
<dbReference type="SUPFAM" id="SSF143437">
    <property type="entry name" value="THUMP domain-like"/>
    <property type="match status" value="1"/>
</dbReference>
<dbReference type="PROSITE" id="PS51165">
    <property type="entry name" value="THUMP"/>
    <property type="match status" value="1"/>
</dbReference>
<evidence type="ECO:0000255" key="1">
    <source>
        <dbReference type="HAMAP-Rule" id="MF_00021"/>
    </source>
</evidence>
<keyword id="KW-0067">ATP-binding</keyword>
<keyword id="KW-0963">Cytoplasm</keyword>
<keyword id="KW-0547">Nucleotide-binding</keyword>
<keyword id="KW-1185">Reference proteome</keyword>
<keyword id="KW-0694">RNA-binding</keyword>
<keyword id="KW-0784">Thiamine biosynthesis</keyword>
<keyword id="KW-0808">Transferase</keyword>
<keyword id="KW-0820">tRNA-binding</keyword>